<comment type="function">
    <text evidence="1">Catalyzes the dephosphorylation of undecaprenyl diphosphate (UPP). Confers resistance to bacitracin.</text>
</comment>
<comment type="catalytic activity">
    <reaction evidence="1">
        <text>di-trans,octa-cis-undecaprenyl diphosphate + H2O = di-trans,octa-cis-undecaprenyl phosphate + phosphate + H(+)</text>
        <dbReference type="Rhea" id="RHEA:28094"/>
        <dbReference type="ChEBI" id="CHEBI:15377"/>
        <dbReference type="ChEBI" id="CHEBI:15378"/>
        <dbReference type="ChEBI" id="CHEBI:43474"/>
        <dbReference type="ChEBI" id="CHEBI:58405"/>
        <dbReference type="ChEBI" id="CHEBI:60392"/>
        <dbReference type="EC" id="3.6.1.27"/>
    </reaction>
</comment>
<comment type="subcellular location">
    <subcellularLocation>
        <location evidence="1">Cell inner membrane</location>
        <topology evidence="1">Multi-pass membrane protein</topology>
    </subcellularLocation>
</comment>
<comment type="miscellaneous">
    <text>Bacitracin is thought to be involved in the inhibition of peptidoglycan synthesis by sequestering undecaprenyl diphosphate, thereby reducing the pool of lipid carrier available.</text>
</comment>
<comment type="similarity">
    <text evidence="1">Belongs to the UppP family.</text>
</comment>
<protein>
    <recommendedName>
        <fullName evidence="1">Undecaprenyl-diphosphatase</fullName>
        <ecNumber evidence="1">3.6.1.27</ecNumber>
    </recommendedName>
    <alternativeName>
        <fullName evidence="1">Bacitracin resistance protein</fullName>
    </alternativeName>
    <alternativeName>
        <fullName evidence="1">Undecaprenyl pyrophosphate phosphatase</fullName>
    </alternativeName>
</protein>
<evidence type="ECO:0000255" key="1">
    <source>
        <dbReference type="HAMAP-Rule" id="MF_01006"/>
    </source>
</evidence>
<gene>
    <name evidence="1" type="primary">uppP</name>
    <name type="ordered locus">NMCC_1738</name>
</gene>
<reference key="1">
    <citation type="journal article" date="2008" name="Genomics">
        <title>Characterization of ST-4821 complex, a unique Neisseria meningitidis clone.</title>
        <authorList>
            <person name="Peng J."/>
            <person name="Yang L."/>
            <person name="Yang F."/>
            <person name="Yang J."/>
            <person name="Yan Y."/>
            <person name="Nie H."/>
            <person name="Zhang X."/>
            <person name="Xiong Z."/>
            <person name="Jiang Y."/>
            <person name="Cheng F."/>
            <person name="Xu X."/>
            <person name="Chen S."/>
            <person name="Sun L."/>
            <person name="Li W."/>
            <person name="Shen Y."/>
            <person name="Shao Z."/>
            <person name="Liang X."/>
            <person name="Xu J."/>
            <person name="Jin Q."/>
        </authorList>
    </citation>
    <scope>NUCLEOTIDE SEQUENCE [LARGE SCALE GENOMIC DNA]</scope>
    <source>
        <strain>053442</strain>
    </source>
</reference>
<organism>
    <name type="scientific">Neisseria meningitidis serogroup C (strain 053442)</name>
    <dbReference type="NCBI Taxonomy" id="374833"/>
    <lineage>
        <taxon>Bacteria</taxon>
        <taxon>Pseudomonadati</taxon>
        <taxon>Pseudomonadota</taxon>
        <taxon>Betaproteobacteria</taxon>
        <taxon>Neisseriales</taxon>
        <taxon>Neisseriaceae</taxon>
        <taxon>Neisseria</taxon>
    </lineage>
</organism>
<feature type="chain" id="PRO_1000083982" description="Undecaprenyl-diphosphatase">
    <location>
        <begin position="1"/>
        <end position="273"/>
    </location>
</feature>
<feature type="transmembrane region" description="Helical" evidence="1">
    <location>
        <begin position="13"/>
        <end position="35"/>
    </location>
</feature>
<feature type="transmembrane region" description="Helical" evidence="1">
    <location>
        <begin position="45"/>
        <end position="62"/>
    </location>
</feature>
<feature type="transmembrane region" description="Helical" evidence="1">
    <location>
        <begin position="82"/>
        <end position="102"/>
    </location>
</feature>
<feature type="transmembrane region" description="Helical" evidence="1">
    <location>
        <begin position="108"/>
        <end position="128"/>
    </location>
</feature>
<feature type="transmembrane region" description="Helical" evidence="1">
    <location>
        <begin position="144"/>
        <end position="164"/>
    </location>
</feature>
<feature type="transmembrane region" description="Helical" evidence="1">
    <location>
        <begin position="186"/>
        <end position="206"/>
    </location>
</feature>
<feature type="transmembrane region" description="Helical" evidence="1">
    <location>
        <begin position="219"/>
        <end position="239"/>
    </location>
</feature>
<feature type="transmembrane region" description="Helical" evidence="1">
    <location>
        <begin position="250"/>
        <end position="270"/>
    </location>
</feature>
<name>UPPP_NEIM0</name>
<sequence length="273" mass="30327">MDFLIVLKALMMGLVEGFTEFLPISSTGHLIVFGNLIGFHSNHKVFEIAIQLGAVLAVVFEYRQRFSNVLHGVGKDRKANRFVLNLAIAFIPAAVMGLLFGKQIKEHLFNPLSVAVMLVLGGLFILWVEKRQSWAEPKIADVDALRPIDALMIGVAQVFALIPGTSRSGSTIMGGMLWGIERKTATEFSFFLAVPMMVAATAYDVLKHYRFFTLHDVGLILIGFVAAFVSGLVAVKALLRFVSKKNYIPFAYYRIVFGIAIIILWLSGWISWE</sequence>
<accession>A9M2I7</accession>
<keyword id="KW-0046">Antibiotic resistance</keyword>
<keyword id="KW-0997">Cell inner membrane</keyword>
<keyword id="KW-1003">Cell membrane</keyword>
<keyword id="KW-0133">Cell shape</keyword>
<keyword id="KW-0961">Cell wall biogenesis/degradation</keyword>
<keyword id="KW-0378">Hydrolase</keyword>
<keyword id="KW-0472">Membrane</keyword>
<keyword id="KW-0573">Peptidoglycan synthesis</keyword>
<keyword id="KW-0812">Transmembrane</keyword>
<keyword id="KW-1133">Transmembrane helix</keyword>
<proteinExistence type="inferred from homology"/>
<dbReference type="EC" id="3.6.1.27" evidence="1"/>
<dbReference type="EMBL" id="CP000381">
    <property type="protein sequence ID" value="ABX73879.1"/>
    <property type="molecule type" value="Genomic_DNA"/>
</dbReference>
<dbReference type="RefSeq" id="WP_002235494.1">
    <property type="nucleotide sequence ID" value="NC_010120.1"/>
</dbReference>
<dbReference type="SMR" id="A9M2I7"/>
<dbReference type="KEGG" id="nmn:NMCC_1738"/>
<dbReference type="HOGENOM" id="CLU_060296_2_0_4"/>
<dbReference type="Proteomes" id="UP000001177">
    <property type="component" value="Chromosome"/>
</dbReference>
<dbReference type="GO" id="GO:0005886">
    <property type="term" value="C:plasma membrane"/>
    <property type="evidence" value="ECO:0007669"/>
    <property type="project" value="UniProtKB-SubCell"/>
</dbReference>
<dbReference type="GO" id="GO:0050380">
    <property type="term" value="F:undecaprenyl-diphosphatase activity"/>
    <property type="evidence" value="ECO:0007669"/>
    <property type="project" value="UniProtKB-UniRule"/>
</dbReference>
<dbReference type="GO" id="GO:0071555">
    <property type="term" value="P:cell wall organization"/>
    <property type="evidence" value="ECO:0007669"/>
    <property type="project" value="UniProtKB-KW"/>
</dbReference>
<dbReference type="GO" id="GO:0009252">
    <property type="term" value="P:peptidoglycan biosynthetic process"/>
    <property type="evidence" value="ECO:0007669"/>
    <property type="project" value="UniProtKB-KW"/>
</dbReference>
<dbReference type="GO" id="GO:0008360">
    <property type="term" value="P:regulation of cell shape"/>
    <property type="evidence" value="ECO:0007669"/>
    <property type="project" value="UniProtKB-KW"/>
</dbReference>
<dbReference type="GO" id="GO:0046677">
    <property type="term" value="P:response to antibiotic"/>
    <property type="evidence" value="ECO:0007669"/>
    <property type="project" value="UniProtKB-UniRule"/>
</dbReference>
<dbReference type="HAMAP" id="MF_01006">
    <property type="entry name" value="Undec_diphosphatase"/>
    <property type="match status" value="1"/>
</dbReference>
<dbReference type="InterPro" id="IPR003824">
    <property type="entry name" value="UppP"/>
</dbReference>
<dbReference type="NCBIfam" id="NF001389">
    <property type="entry name" value="PRK00281.1-2"/>
    <property type="match status" value="1"/>
</dbReference>
<dbReference type="NCBIfam" id="NF001390">
    <property type="entry name" value="PRK00281.1-4"/>
    <property type="match status" value="1"/>
</dbReference>
<dbReference type="NCBIfam" id="TIGR00753">
    <property type="entry name" value="undec_PP_bacA"/>
    <property type="match status" value="1"/>
</dbReference>
<dbReference type="PANTHER" id="PTHR30622">
    <property type="entry name" value="UNDECAPRENYL-DIPHOSPHATASE"/>
    <property type="match status" value="1"/>
</dbReference>
<dbReference type="PANTHER" id="PTHR30622:SF3">
    <property type="entry name" value="UNDECAPRENYL-DIPHOSPHATASE"/>
    <property type="match status" value="1"/>
</dbReference>
<dbReference type="Pfam" id="PF02673">
    <property type="entry name" value="BacA"/>
    <property type="match status" value="1"/>
</dbReference>